<protein>
    <recommendedName>
        <fullName evidence="2">Galactoside alpha-(1,2)-fucosyltransferase 2</fullName>
    </recommendedName>
    <alternativeName>
        <fullName>Alpha(1,2)FT 2</fullName>
    </alternativeName>
    <alternativeName>
        <fullName>Fucosyltransferase 2</fullName>
    </alternativeName>
    <alternativeName>
        <fullName>GDP-L-fucose:beta-D-galactoside 2-alpha-L-fucosyltransferase 2</fullName>
    </alternativeName>
    <alternativeName>
        <fullName evidence="2">Type 1 galactoside alpha-(1,2)-fucosyltransferase FUT2</fullName>
        <ecNumber evidence="5">2.4.1.69</ecNumber>
    </alternativeName>
    <alternativeName>
        <fullName evidence="2">Type 2 galactoside alpha-(1,2)-fucosyltransferase FUT2</fullName>
        <ecNumber evidence="5">2.4.1.344</ecNumber>
    </alternativeName>
</protein>
<name>FUT2_GORGO</name>
<comment type="function">
    <text evidence="5">Catalyzes the transfer of L-fucose, from a guanosine diphosphate-beta-L-fucose, to the terminal galactose on both O- and N-linked glycans chains of cell surface glycoproteins and glycolipids and the resulting epitope regulates several processes such as cell-cell interaction including host-microbe interaction, cell surface expression and cell proliferation. Preferentially fucosylates gangliosides GA1 and GM1 in the antrum, cecum and colon and in the female reproductive organs. Fucosylated host glycoproteins or glycolipids mediate interaction with intestinal microbiota influencing its composition. Creates a soluble precursor oligosaccharide FuC-alpha ((1,2)Galbeta-) called the H antigen which is an essential substrate for the final step in the soluble ABO blood group antigen synthesis pathway.</text>
</comment>
<comment type="catalytic activity">
    <reaction evidence="5">
        <text>a beta-D-galactosyl-(1-&gt;3)-N-acetyl-beta-D-glucosaminyl derivative + GDP-beta-L-fucose = an alpha-L-Fuc-(1-&gt;2)-beta-D-Gal-(1-&gt;3)-beta-D-GlcNAc derivative + GDP + H(+)</text>
        <dbReference type="Rhea" id="RHEA:50664"/>
        <dbReference type="ChEBI" id="CHEBI:15378"/>
        <dbReference type="ChEBI" id="CHEBI:57273"/>
        <dbReference type="ChEBI" id="CHEBI:58189"/>
        <dbReference type="ChEBI" id="CHEBI:133506"/>
        <dbReference type="ChEBI" id="CHEBI:133509"/>
        <dbReference type="EC" id="2.4.1.69"/>
    </reaction>
    <physiologicalReaction direction="left-to-right" evidence="5">
        <dbReference type="Rhea" id="RHEA:50665"/>
    </physiologicalReaction>
</comment>
<comment type="catalytic activity">
    <reaction evidence="5">
        <text>a beta-D-galactosyl-(1-&gt;4)-N-acetyl-beta-D-glucosaminyl derivative + GDP-beta-L-fucose = an alpha-L-Fuc-(1-&gt;2)-beta-D-Gal-(1-&gt;4)-beta-D-GlcNAc derivative + GDP + H(+)</text>
        <dbReference type="Rhea" id="RHEA:50668"/>
        <dbReference type="ChEBI" id="CHEBI:15378"/>
        <dbReference type="ChEBI" id="CHEBI:57273"/>
        <dbReference type="ChEBI" id="CHEBI:58189"/>
        <dbReference type="ChEBI" id="CHEBI:133507"/>
        <dbReference type="ChEBI" id="CHEBI:133510"/>
        <dbReference type="EC" id="2.4.1.344"/>
    </reaction>
    <physiologicalReaction direction="left-to-right" evidence="5">
        <dbReference type="Rhea" id="RHEA:50669"/>
    </physiologicalReaction>
</comment>
<comment type="catalytic activity">
    <reaction evidence="5">
        <text>a neolactoside nLc4Cer + GDP-beta-L-fucose = a neolactoside IV(2)-alpha-Fuc-nLc4Cer + GDP + H(+)</text>
        <dbReference type="Rhea" id="RHEA:48800"/>
        <dbReference type="ChEBI" id="CHEBI:15378"/>
        <dbReference type="ChEBI" id="CHEBI:57273"/>
        <dbReference type="ChEBI" id="CHEBI:58189"/>
        <dbReference type="ChEBI" id="CHEBI:90376"/>
        <dbReference type="ChEBI" id="CHEBI:90803"/>
    </reaction>
    <physiologicalReaction direction="left-to-right" evidence="5">
        <dbReference type="Rhea" id="RHEA:48801"/>
    </physiologicalReaction>
</comment>
<comment type="catalytic activity">
    <reaction evidence="5">
        <text>a neolactoside nLc4Cer(d18:1(4E)) + GDP-beta-L-fucose = a neolactoside IV(2)-alpha-Fuc-nLc4Cer(d18:1(4E)) + GDP + H(+)</text>
        <dbReference type="Rhea" id="RHEA:48304"/>
        <dbReference type="ChEBI" id="CHEBI:15378"/>
        <dbReference type="ChEBI" id="CHEBI:17006"/>
        <dbReference type="ChEBI" id="CHEBI:28691"/>
        <dbReference type="ChEBI" id="CHEBI:57273"/>
        <dbReference type="ChEBI" id="CHEBI:58189"/>
    </reaction>
    <physiologicalReaction direction="left-to-right" evidence="5">
        <dbReference type="Rhea" id="RHEA:48305"/>
    </physiologicalReaction>
</comment>
<comment type="catalytic activity">
    <reaction evidence="5">
        <text>a ganglioside GM1 + GDP-beta-L-fucose = a ganglioside Fuc-GM1 + GDP + H(+)</text>
        <dbReference type="Rhea" id="RHEA:48292"/>
        <dbReference type="ChEBI" id="CHEBI:15378"/>
        <dbReference type="ChEBI" id="CHEBI:57273"/>
        <dbReference type="ChEBI" id="CHEBI:58189"/>
        <dbReference type="ChEBI" id="CHEBI:82639"/>
        <dbReference type="ChEBI" id="CHEBI:90189"/>
    </reaction>
    <physiologicalReaction direction="left-to-right" evidence="5">
        <dbReference type="Rhea" id="RHEA:48293"/>
    </physiologicalReaction>
</comment>
<comment type="catalytic activity">
    <reaction evidence="5">
        <text>a ganglioside GA1 + GDP-beta-L-fucose = a ganglioside Fuc-GA1 + GDP + H(+)</text>
        <dbReference type="Rhea" id="RHEA:48320"/>
        <dbReference type="ChEBI" id="CHEBI:15378"/>
        <dbReference type="ChEBI" id="CHEBI:57273"/>
        <dbReference type="ChEBI" id="CHEBI:58189"/>
        <dbReference type="ChEBI" id="CHEBI:88069"/>
        <dbReference type="ChEBI" id="CHEBI:90262"/>
    </reaction>
    <physiologicalReaction direction="left-to-right" evidence="5">
        <dbReference type="Rhea" id="RHEA:48321"/>
    </physiologicalReaction>
</comment>
<comment type="catalytic activity">
    <reaction evidence="5">
        <text>Lc4Cer + GDP-beta-L-fucose = alpha-L-fucosyl-(1-&gt;2)-beta-D-galactosyl-(1-&gt;3)-N-acetyl-beta-D-glucosaminyl-(1-&gt;3)-beta-D-galactosyl-(1-&gt;4)-beta-D-glucosyl-(1&lt;-&gt;1')-ceramide + GDP + H(+)</text>
        <dbReference type="Rhea" id="RHEA:48792"/>
        <dbReference type="ChEBI" id="CHEBI:15378"/>
        <dbReference type="ChEBI" id="CHEBI:57273"/>
        <dbReference type="ChEBI" id="CHEBI:58189"/>
        <dbReference type="ChEBI" id="CHEBI:90800"/>
        <dbReference type="ChEBI" id="CHEBI:90802"/>
    </reaction>
    <physiologicalReaction direction="left-to-right" evidence="5">
        <dbReference type="Rhea" id="RHEA:48793"/>
    </physiologicalReaction>
</comment>
<comment type="catalytic activity">
    <reaction evidence="5">
        <text>a beta-D-Gal-(1-&gt;3)-beta-D-GlcNAc-(1-&gt;3)-beta-D-Gal-(1-&gt;4)-beta-D-Glc-(1&lt;-&gt;1')-Cer(d18:1(4E)) + GDP-beta-L-fucose = alpha-L-fucosyl-(1-&gt;2)- beta-D-galactosyl-(1-&gt;3)-N-acetyl-beta-D-glucosaminyl-(1-&gt;3)-beta-D-galactosyl-(1-&gt;4)-beta-D-glucosyl-(1&lt;-&gt;1')-N-acylsphing-4-enine + GDP + H(+)</text>
        <dbReference type="Rhea" id="RHEA:32175"/>
        <dbReference type="ChEBI" id="CHEBI:15378"/>
        <dbReference type="ChEBI" id="CHEBI:17292"/>
        <dbReference type="ChEBI" id="CHEBI:28743"/>
        <dbReference type="ChEBI" id="CHEBI:57273"/>
        <dbReference type="ChEBI" id="CHEBI:58189"/>
        <dbReference type="EC" id="2.4.1.69"/>
    </reaction>
    <physiologicalReaction direction="left-to-right" evidence="5">
        <dbReference type="Rhea" id="RHEA:32176"/>
    </physiologicalReaction>
</comment>
<comment type="catalytic activity">
    <reaction evidence="5">
        <text>a ganglioside GD1b + GDP-beta-L-fucose = a ganglioside Fuc-GD1b + GDP + H(+)</text>
        <dbReference type="Rhea" id="RHEA:48324"/>
        <dbReference type="ChEBI" id="CHEBI:15378"/>
        <dbReference type="ChEBI" id="CHEBI:57273"/>
        <dbReference type="ChEBI" id="CHEBI:58189"/>
        <dbReference type="ChEBI" id="CHEBI:82939"/>
        <dbReference type="ChEBI" id="CHEBI:90265"/>
    </reaction>
    <physiologicalReaction direction="left-to-right" evidence="5">
        <dbReference type="Rhea" id="RHEA:48325"/>
    </physiologicalReaction>
</comment>
<comment type="catalytic activity">
    <reaction evidence="3">
        <text>a ganglioside GM1 (d18:1(4E)) + GDP-beta-L-fucose = a ganglioside Fuc-GM1 (d18:1(4E)) + GDP + H(+)</text>
        <dbReference type="Rhea" id="RHEA:42040"/>
        <dbReference type="ChEBI" id="CHEBI:15378"/>
        <dbReference type="ChEBI" id="CHEBI:57273"/>
        <dbReference type="ChEBI" id="CHEBI:58189"/>
        <dbReference type="ChEBI" id="CHEBI:77709"/>
        <dbReference type="ChEBI" id="CHEBI:78607"/>
    </reaction>
    <physiologicalReaction direction="left-to-right" evidence="3">
        <dbReference type="Rhea" id="RHEA:42041"/>
    </physiologicalReaction>
</comment>
<comment type="catalytic activity">
    <reaction evidence="3">
        <text>a globoside GalGb4Cer (d18:1(4E)) + GDP-beta-L-fucose = a globoside Globo-H (d18:1(4E)) + GDP + H(+)</text>
        <dbReference type="Rhea" id="RHEA:42044"/>
        <dbReference type="ChEBI" id="CHEBI:15378"/>
        <dbReference type="ChEBI" id="CHEBI:57273"/>
        <dbReference type="ChEBI" id="CHEBI:58189"/>
        <dbReference type="ChEBI" id="CHEBI:62571"/>
        <dbReference type="ChEBI" id="CHEBI:62649"/>
    </reaction>
    <physiologicalReaction direction="left-to-right" evidence="3">
        <dbReference type="Rhea" id="RHEA:42045"/>
    </physiologicalReaction>
</comment>
<comment type="catalytic activity">
    <reaction evidence="5">
        <text>a lactoside III(4)-a-Fuc-Lc4Cer + GDP-beta-L-fucose = a lactoside IV(2),III(4)-a-[Fuc]2-Lc4Cer + GDP + H(+)</text>
        <dbReference type="Rhea" id="RHEA:62616"/>
        <dbReference type="ChEBI" id="CHEBI:15378"/>
        <dbReference type="ChEBI" id="CHEBI:57273"/>
        <dbReference type="ChEBI" id="CHEBI:58189"/>
        <dbReference type="ChEBI" id="CHEBI:90811"/>
        <dbReference type="ChEBI" id="CHEBI:142612"/>
    </reaction>
    <physiologicalReaction direction="left-to-right" evidence="5">
        <dbReference type="Rhea" id="RHEA:62617"/>
    </physiologicalReaction>
</comment>
<comment type="catalytic activity">
    <reaction evidence="4">
        <text>beta-D-galactosyl-(1-&gt;3)-N-acetyl-D-galactosamine + GDP-beta-L-fucose = alpha-L-fucosyl-(1-&gt;2)-beta-D-galactosyl-(1-&gt;3)-N-acetyl-D-galactosamine + GDP + H(+)</text>
        <dbReference type="Rhea" id="RHEA:62964"/>
        <dbReference type="ChEBI" id="CHEBI:15378"/>
        <dbReference type="ChEBI" id="CHEBI:57273"/>
        <dbReference type="ChEBI" id="CHEBI:58189"/>
        <dbReference type="ChEBI" id="CHEBI:84728"/>
        <dbReference type="ChEBI" id="CHEBI:546807"/>
    </reaction>
    <physiologicalReaction direction="left-to-right" evidence="4">
        <dbReference type="Rhea" id="RHEA:62965"/>
    </physiologicalReaction>
</comment>
<comment type="pathway">
    <text evidence="5">Protein modification; protein glycosylation.</text>
</comment>
<comment type="subcellular location">
    <subcellularLocation>
        <location evidence="1">Golgi apparatus</location>
        <location evidence="1">Golgi stack membrane</location>
        <topology evidence="1">Single-pass type II membrane protein</topology>
    </subcellularLocation>
    <text evidence="1">Membrane-bound form in trans cisternae of Golgi.</text>
</comment>
<comment type="similarity">
    <text evidence="7">Belongs to the glycosyltransferase 11 family.</text>
</comment>
<sequence length="343" mass="38973">MLVVQMPFSFPMAHFILFVFTVSTIFHVQQRLAKIQAMWELPVQIPVLASTSKALGPSQLRGMWTINAIGRLGNQMGEYATLYALAKMNGRPAFIPAQMHSTLAPIFRITLPVLHSATASRIPWQNYHLNDWMEEEYRHIPGEYVRFTGYPCSWTFYHHLRQEILQEFTLHDHVREEAQKFLRGLQVNGSQPGTFVGVHVRRGDYVHVMPKVWKGVVADRRYLQQALDWFRARYSSPIFVVTSNGMAWCRENIDTSHGDVVFAGDGIEGSPAKDFALLTQCNHTIMTIGTFGIWAAYLTGGDTIYLANYTLPDSPFLKIFKPEAAFLPEWTGIAADLSPLLKH</sequence>
<keyword id="KW-0325">Glycoprotein</keyword>
<keyword id="KW-0328">Glycosyltransferase</keyword>
<keyword id="KW-0333">Golgi apparatus</keyword>
<keyword id="KW-0443">Lipid metabolism</keyword>
<keyword id="KW-0472">Membrane</keyword>
<keyword id="KW-1185">Reference proteome</keyword>
<keyword id="KW-0735">Signal-anchor</keyword>
<keyword id="KW-0808">Transferase</keyword>
<keyword id="KW-0812">Transmembrane</keyword>
<keyword id="KW-1133">Transmembrane helix</keyword>
<evidence type="ECO:0000250" key="1"/>
<evidence type="ECO:0000250" key="2">
    <source>
        <dbReference type="UniProtKB" id="Q10981"/>
    </source>
</evidence>
<evidence type="ECO:0000250" key="3">
    <source>
        <dbReference type="UniProtKB" id="Q10984"/>
    </source>
</evidence>
<evidence type="ECO:0000250" key="4">
    <source>
        <dbReference type="UniProtKB" id="Q28113"/>
    </source>
</evidence>
<evidence type="ECO:0000250" key="5">
    <source>
        <dbReference type="UniProtKB" id="Q9JL27"/>
    </source>
</evidence>
<evidence type="ECO:0000255" key="6"/>
<evidence type="ECO:0000305" key="7"/>
<feature type="chain" id="PRO_0000149107" description="Galactoside alpha-(1,2)-fucosyltransferase 2">
    <location>
        <begin position="1"/>
        <end position="343"/>
    </location>
</feature>
<feature type="topological domain" description="Cytoplasmic" evidence="6">
    <location>
        <begin position="1"/>
        <end position="14"/>
    </location>
</feature>
<feature type="transmembrane region" description="Helical; Signal-anchor for type II membrane protein" evidence="6">
    <location>
        <begin position="15"/>
        <end position="28"/>
    </location>
</feature>
<feature type="topological domain" description="Lumenal" evidence="6">
    <location>
        <begin position="29"/>
        <end position="343"/>
    </location>
</feature>
<feature type="glycosylation site" description="N-linked (GlcNAc...) asparagine" evidence="6">
    <location>
        <position position="188"/>
    </location>
</feature>
<feature type="glycosylation site" description="N-linked (GlcNAc...) asparagine" evidence="6">
    <location>
        <position position="282"/>
    </location>
</feature>
<feature type="glycosylation site" description="N-linked (GlcNAc...) asparagine" evidence="6">
    <location>
        <position position="308"/>
    </location>
</feature>
<feature type="sequence conflict" description="In Ref. 2; AAF14068." evidence="7" ref="2">
    <original>Q</original>
    <variation>R</variation>
    <location>
        <position position="191"/>
    </location>
</feature>
<reference key="1">
    <citation type="submission" date="1998-06" db="EMBL/GenBank/DDBJ databases">
        <title>The old origin of a null allele se428 of the human ABO-secretor type alpha(1,2) fucosyltransferase gene (FUT2).</title>
        <authorList>
            <person name="Koda Y."/>
            <person name="Tachida H."/>
            <person name="Soejima M."/>
            <person name="Takenaka O."/>
            <person name="Kimura H."/>
        </authorList>
    </citation>
    <scope>NUCLEOTIDE SEQUENCE [GENOMIC DNA]</scope>
</reference>
<reference key="2">
    <citation type="journal article" date="2000" name="Mol. Biol. Evol.">
        <title>Evolution of alpha 2-fucosyltransferase genes in primates: relation between an intronic Alu-Y element and red cell expression of ABH antigens.</title>
        <authorList>
            <person name="Apoil P.-A."/>
            <person name="Roubinet F."/>
            <person name="Despiau S."/>
            <person name="Mollicone R."/>
            <person name="Oriol R."/>
            <person name="Blancher A."/>
        </authorList>
    </citation>
    <scope>NUCLEOTIDE SEQUENCE [GENOMIC DNA]</scope>
    <source>
        <strain>Isolate Alexis</strain>
    </source>
</reference>
<dbReference type="EC" id="2.4.1.69" evidence="5"/>
<dbReference type="EC" id="2.4.1.344" evidence="5"/>
<dbReference type="EMBL" id="AB015635">
    <property type="protein sequence ID" value="BAA31128.1"/>
    <property type="molecule type" value="Genomic_DNA"/>
</dbReference>
<dbReference type="EMBL" id="AF080606">
    <property type="protein sequence ID" value="AAF14068.1"/>
    <property type="molecule type" value="Genomic_DNA"/>
</dbReference>
<dbReference type="FunCoup" id="O77486">
    <property type="interactions" value="66"/>
</dbReference>
<dbReference type="STRING" id="9593.ENSGGOP00000001219"/>
<dbReference type="CAZy" id="GT11">
    <property type="family name" value="Glycosyltransferase Family 11"/>
</dbReference>
<dbReference type="GlyCosmos" id="O77486">
    <property type="glycosylation" value="3 sites, No reported glycans"/>
</dbReference>
<dbReference type="Ensembl" id="ENSGGOT00000001243.3">
    <property type="protein sequence ID" value="ENSGGOP00000001219.2"/>
    <property type="gene ID" value="ENSGGOG00000001236.3"/>
</dbReference>
<dbReference type="eggNOG" id="ENOG502S316">
    <property type="taxonomic scope" value="Eukaryota"/>
</dbReference>
<dbReference type="GeneTree" id="ENSGT00390000001450"/>
<dbReference type="HOGENOM" id="CLU_043399_0_1_1"/>
<dbReference type="InParanoid" id="O77486"/>
<dbReference type="OMA" id="KGMWTIN"/>
<dbReference type="BRENDA" id="2.4.1.69">
    <property type="organism ID" value="2496"/>
</dbReference>
<dbReference type="UniPathway" id="UPA00378"/>
<dbReference type="Proteomes" id="UP000001519">
    <property type="component" value="Chromosome 19"/>
</dbReference>
<dbReference type="Bgee" id="ENSGGOG00000001236">
    <property type="expression patterns" value="Expressed in cerebellum and 5 other cell types or tissues"/>
</dbReference>
<dbReference type="GO" id="GO:0032580">
    <property type="term" value="C:Golgi cisterna membrane"/>
    <property type="evidence" value="ECO:0007669"/>
    <property type="project" value="UniProtKB-SubCell"/>
</dbReference>
<dbReference type="GO" id="GO:0031127">
    <property type="term" value="F:alpha-(1,2)-fucosyltransferase activity"/>
    <property type="evidence" value="ECO:0000250"/>
    <property type="project" value="UniProtKB"/>
</dbReference>
<dbReference type="GO" id="GO:0008107">
    <property type="term" value="F:galactoside 2-alpha-L-fucosyltransferase activity"/>
    <property type="evidence" value="ECO:0000318"/>
    <property type="project" value="GO_Central"/>
</dbReference>
<dbReference type="GO" id="GO:0036065">
    <property type="term" value="P:fucosylation"/>
    <property type="evidence" value="ECO:0000250"/>
    <property type="project" value="UniProtKB"/>
</dbReference>
<dbReference type="GO" id="GO:0006664">
    <property type="term" value="P:glycolipid metabolic process"/>
    <property type="evidence" value="ECO:0000250"/>
    <property type="project" value="UniProtKB"/>
</dbReference>
<dbReference type="GO" id="GO:0009312">
    <property type="term" value="P:oligosaccharide biosynthetic process"/>
    <property type="evidence" value="ECO:0007669"/>
    <property type="project" value="Ensembl"/>
</dbReference>
<dbReference type="GO" id="GO:0006486">
    <property type="term" value="P:protein glycosylation"/>
    <property type="evidence" value="ECO:0000318"/>
    <property type="project" value="GO_Central"/>
</dbReference>
<dbReference type="GO" id="GO:0030155">
    <property type="term" value="P:regulation of cell adhesion"/>
    <property type="evidence" value="ECO:0000250"/>
    <property type="project" value="UniProtKB"/>
</dbReference>
<dbReference type="GO" id="GO:0001936">
    <property type="term" value="P:regulation of endothelial cell proliferation"/>
    <property type="evidence" value="ECO:0000250"/>
    <property type="project" value="UniProtKB"/>
</dbReference>
<dbReference type="CDD" id="cd11301">
    <property type="entry name" value="Fut1_Fut2_like"/>
    <property type="match status" value="1"/>
</dbReference>
<dbReference type="InterPro" id="IPR002516">
    <property type="entry name" value="Glyco_trans_11"/>
</dbReference>
<dbReference type="PANTHER" id="PTHR11927">
    <property type="entry name" value="GALACTOSIDE 2-L-FUCOSYLTRANSFERASE"/>
    <property type="match status" value="1"/>
</dbReference>
<dbReference type="PANTHER" id="PTHR11927:SF2">
    <property type="entry name" value="GALACTOSIDE ALPHA-(1,2)-FUCOSYLTRANSFERASE 2"/>
    <property type="match status" value="1"/>
</dbReference>
<dbReference type="Pfam" id="PF01531">
    <property type="entry name" value="Glyco_transf_11"/>
    <property type="match status" value="1"/>
</dbReference>
<organism>
    <name type="scientific">Gorilla gorilla gorilla</name>
    <name type="common">Western lowland gorilla</name>
    <dbReference type="NCBI Taxonomy" id="9595"/>
    <lineage>
        <taxon>Eukaryota</taxon>
        <taxon>Metazoa</taxon>
        <taxon>Chordata</taxon>
        <taxon>Craniata</taxon>
        <taxon>Vertebrata</taxon>
        <taxon>Euteleostomi</taxon>
        <taxon>Mammalia</taxon>
        <taxon>Eutheria</taxon>
        <taxon>Euarchontoglires</taxon>
        <taxon>Primates</taxon>
        <taxon>Haplorrhini</taxon>
        <taxon>Catarrhini</taxon>
        <taxon>Hominidae</taxon>
        <taxon>Gorilla</taxon>
    </lineage>
</organism>
<accession>O77486</accession>
<accession>Q9TUD3</accession>
<gene>
    <name evidence="2" type="primary">FUT2</name>
</gene>
<proteinExistence type="inferred from homology"/>